<proteinExistence type="inferred from homology"/>
<dbReference type="EC" id="1.8.4.12" evidence="1"/>
<dbReference type="EMBL" id="CP000703">
    <property type="protein sequence ID" value="ABQ49277.1"/>
    <property type="molecule type" value="Genomic_DNA"/>
</dbReference>
<dbReference type="RefSeq" id="WP_000913317.1">
    <property type="nucleotide sequence ID" value="NC_009487.1"/>
</dbReference>
<dbReference type="SMR" id="A5ISV4"/>
<dbReference type="KEGG" id="saj:SaurJH9_1483"/>
<dbReference type="HOGENOM" id="CLU_031040_8_5_9"/>
<dbReference type="GO" id="GO:0005737">
    <property type="term" value="C:cytoplasm"/>
    <property type="evidence" value="ECO:0007669"/>
    <property type="project" value="TreeGrafter"/>
</dbReference>
<dbReference type="GO" id="GO:0033743">
    <property type="term" value="F:peptide-methionine (R)-S-oxide reductase activity"/>
    <property type="evidence" value="ECO:0007669"/>
    <property type="project" value="UniProtKB-UniRule"/>
</dbReference>
<dbReference type="GO" id="GO:0030091">
    <property type="term" value="P:protein repair"/>
    <property type="evidence" value="ECO:0007669"/>
    <property type="project" value="InterPro"/>
</dbReference>
<dbReference type="GO" id="GO:0006979">
    <property type="term" value="P:response to oxidative stress"/>
    <property type="evidence" value="ECO:0007669"/>
    <property type="project" value="InterPro"/>
</dbReference>
<dbReference type="FunFam" id="2.170.150.20:FF:000003">
    <property type="entry name" value="Peptide methionine sulfoxide reductase MsrB"/>
    <property type="match status" value="1"/>
</dbReference>
<dbReference type="Gene3D" id="2.170.150.20">
    <property type="entry name" value="Peptide methionine sulfoxide reductase"/>
    <property type="match status" value="1"/>
</dbReference>
<dbReference type="HAMAP" id="MF_01400">
    <property type="entry name" value="MsrB"/>
    <property type="match status" value="1"/>
</dbReference>
<dbReference type="InterPro" id="IPR028427">
    <property type="entry name" value="Met_Sox_Rdtase_MsrB"/>
</dbReference>
<dbReference type="InterPro" id="IPR002579">
    <property type="entry name" value="Met_Sox_Rdtase_MsrB_dom"/>
</dbReference>
<dbReference type="InterPro" id="IPR011057">
    <property type="entry name" value="Mss4-like_sf"/>
</dbReference>
<dbReference type="NCBIfam" id="TIGR00357">
    <property type="entry name" value="peptide-methionine (R)-S-oxide reductase MsrB"/>
    <property type="match status" value="1"/>
</dbReference>
<dbReference type="PANTHER" id="PTHR10173">
    <property type="entry name" value="METHIONINE SULFOXIDE REDUCTASE"/>
    <property type="match status" value="1"/>
</dbReference>
<dbReference type="PANTHER" id="PTHR10173:SF59">
    <property type="entry name" value="PEPTIDE METHIONINE SULFOXIDE REDUCTASE MSRA_MSRB"/>
    <property type="match status" value="1"/>
</dbReference>
<dbReference type="Pfam" id="PF01641">
    <property type="entry name" value="SelR"/>
    <property type="match status" value="1"/>
</dbReference>
<dbReference type="SUPFAM" id="SSF51316">
    <property type="entry name" value="Mss4-like"/>
    <property type="match status" value="1"/>
</dbReference>
<dbReference type="PROSITE" id="PS51790">
    <property type="entry name" value="MSRB"/>
    <property type="match status" value="1"/>
</dbReference>
<reference key="1">
    <citation type="submission" date="2007-05" db="EMBL/GenBank/DDBJ databases">
        <title>Complete sequence of chromosome of Staphylococcus aureus subsp. aureus JH9.</title>
        <authorList>
            <consortium name="US DOE Joint Genome Institute"/>
            <person name="Copeland A."/>
            <person name="Lucas S."/>
            <person name="Lapidus A."/>
            <person name="Barry K."/>
            <person name="Detter J.C."/>
            <person name="Glavina del Rio T."/>
            <person name="Hammon N."/>
            <person name="Israni S."/>
            <person name="Pitluck S."/>
            <person name="Chain P."/>
            <person name="Malfatti S."/>
            <person name="Shin M."/>
            <person name="Vergez L."/>
            <person name="Schmutz J."/>
            <person name="Larimer F."/>
            <person name="Land M."/>
            <person name="Hauser L."/>
            <person name="Kyrpides N."/>
            <person name="Kim E."/>
            <person name="Tomasz A."/>
            <person name="Richardson P."/>
        </authorList>
    </citation>
    <scope>NUCLEOTIDE SEQUENCE [LARGE SCALE GENOMIC DNA]</scope>
    <source>
        <strain>JH9</strain>
    </source>
</reference>
<sequence length="142" mass="16263">MLKKDKSELTDIEYIVTQENGTEPPFMNEYWNHFAKGIYVDKISGKPLFTSEEKFHSECGWPSFSKALDDDEIIELVDKSFGMVRTEVRSEESNSHLGHVFNDGPKESGGLRYCINSAAIQFIPYEKLEELGYGDLISHFDK</sequence>
<evidence type="ECO:0000255" key="1">
    <source>
        <dbReference type="HAMAP-Rule" id="MF_01400"/>
    </source>
</evidence>
<evidence type="ECO:0000255" key="2">
    <source>
        <dbReference type="PROSITE-ProRule" id="PRU01126"/>
    </source>
</evidence>
<gene>
    <name evidence="1" type="primary">msrB</name>
    <name type="ordered locus">SaurJH9_1483</name>
</gene>
<name>MSRB_STAA9</name>
<feature type="chain" id="PRO_1000087343" description="Peptide methionine sulfoxide reductase MsrB">
    <location>
        <begin position="1"/>
        <end position="142"/>
    </location>
</feature>
<feature type="domain" description="MsrB" evidence="2">
    <location>
        <begin position="2"/>
        <end position="125"/>
    </location>
</feature>
<feature type="active site" description="Nucleophile" evidence="2">
    <location>
        <position position="114"/>
    </location>
</feature>
<accession>A5ISV4</accession>
<organism>
    <name type="scientific">Staphylococcus aureus (strain JH9)</name>
    <dbReference type="NCBI Taxonomy" id="359786"/>
    <lineage>
        <taxon>Bacteria</taxon>
        <taxon>Bacillati</taxon>
        <taxon>Bacillota</taxon>
        <taxon>Bacilli</taxon>
        <taxon>Bacillales</taxon>
        <taxon>Staphylococcaceae</taxon>
        <taxon>Staphylococcus</taxon>
    </lineage>
</organism>
<keyword id="KW-0560">Oxidoreductase</keyword>
<comment type="catalytic activity">
    <reaction evidence="1">
        <text>L-methionyl-[protein] + [thioredoxin]-disulfide + H2O = L-methionyl-(R)-S-oxide-[protein] + [thioredoxin]-dithiol</text>
        <dbReference type="Rhea" id="RHEA:24164"/>
        <dbReference type="Rhea" id="RHEA-COMP:10698"/>
        <dbReference type="Rhea" id="RHEA-COMP:10700"/>
        <dbReference type="Rhea" id="RHEA-COMP:12313"/>
        <dbReference type="Rhea" id="RHEA-COMP:12314"/>
        <dbReference type="ChEBI" id="CHEBI:15377"/>
        <dbReference type="ChEBI" id="CHEBI:16044"/>
        <dbReference type="ChEBI" id="CHEBI:29950"/>
        <dbReference type="ChEBI" id="CHEBI:45764"/>
        <dbReference type="ChEBI" id="CHEBI:50058"/>
        <dbReference type="EC" id="1.8.4.12"/>
    </reaction>
</comment>
<comment type="similarity">
    <text evidence="1">Belongs to the MsrB Met sulfoxide reductase family.</text>
</comment>
<protein>
    <recommendedName>
        <fullName evidence="1">Peptide methionine sulfoxide reductase MsrB</fullName>
        <ecNumber evidence="1">1.8.4.12</ecNumber>
    </recommendedName>
    <alternativeName>
        <fullName evidence="1">Peptide-methionine (R)-S-oxide reductase</fullName>
    </alternativeName>
</protein>